<feature type="chain" id="PRO_0000388037" description="Structure-specific endonuclease subunit SLX4">
    <location>
        <begin position="1"/>
        <end position="869"/>
    </location>
</feature>
<feature type="region of interest" description="Disordered" evidence="2">
    <location>
        <begin position="40"/>
        <end position="79"/>
    </location>
</feature>
<feature type="region of interest" description="Disordered" evidence="2">
    <location>
        <begin position="92"/>
        <end position="116"/>
    </location>
</feature>
<feature type="region of interest" description="Disordered" evidence="2">
    <location>
        <begin position="165"/>
        <end position="199"/>
    </location>
</feature>
<feature type="region of interest" description="Disordered" evidence="2">
    <location>
        <begin position="293"/>
        <end position="323"/>
    </location>
</feature>
<feature type="region of interest" description="Disordered" evidence="2">
    <location>
        <begin position="351"/>
        <end position="388"/>
    </location>
</feature>
<feature type="region of interest" description="Disordered" evidence="2">
    <location>
        <begin position="418"/>
        <end position="437"/>
    </location>
</feature>
<feature type="region of interest" description="Disordered" evidence="2">
    <location>
        <begin position="630"/>
        <end position="774"/>
    </location>
</feature>
<feature type="compositionally biased region" description="Low complexity" evidence="2">
    <location>
        <begin position="40"/>
        <end position="59"/>
    </location>
</feature>
<feature type="compositionally biased region" description="Basic and acidic residues" evidence="2">
    <location>
        <begin position="63"/>
        <end position="79"/>
    </location>
</feature>
<feature type="compositionally biased region" description="Polar residues" evidence="2">
    <location>
        <begin position="165"/>
        <end position="174"/>
    </location>
</feature>
<feature type="compositionally biased region" description="Polar residues" evidence="2">
    <location>
        <begin position="294"/>
        <end position="311"/>
    </location>
</feature>
<feature type="compositionally biased region" description="Basic residues" evidence="2">
    <location>
        <begin position="312"/>
        <end position="322"/>
    </location>
</feature>
<feature type="compositionally biased region" description="Polar residues" evidence="2">
    <location>
        <begin position="647"/>
        <end position="657"/>
    </location>
</feature>
<feature type="compositionally biased region" description="Polar residues" evidence="2">
    <location>
        <begin position="664"/>
        <end position="673"/>
    </location>
</feature>
<feature type="compositionally biased region" description="Low complexity" evidence="2">
    <location>
        <begin position="688"/>
        <end position="700"/>
    </location>
</feature>
<feature type="compositionally biased region" description="Polar residues" evidence="2">
    <location>
        <begin position="765"/>
        <end position="774"/>
    </location>
</feature>
<dbReference type="EMBL" id="KN275960">
    <property type="protein sequence ID" value="EEH48345.2"/>
    <property type="molecule type" value="Genomic_DNA"/>
</dbReference>
<dbReference type="RefSeq" id="XP_010759462.1">
    <property type="nucleotide sequence ID" value="XM_010761160.1"/>
</dbReference>
<dbReference type="SMR" id="C1GAZ3"/>
<dbReference type="STRING" id="502780.C1GAZ3"/>
<dbReference type="GeneID" id="22583552"/>
<dbReference type="KEGG" id="pbn:PADG_04429"/>
<dbReference type="VEuPathDB" id="FungiDB:PADG_04429"/>
<dbReference type="eggNOG" id="ENOG502SEB3">
    <property type="taxonomic scope" value="Eukaryota"/>
</dbReference>
<dbReference type="HOGENOM" id="CLU_016773_0_0_1"/>
<dbReference type="InParanoid" id="C1GAZ3"/>
<dbReference type="OMA" id="SICCLWK"/>
<dbReference type="OrthoDB" id="6134at33183"/>
<dbReference type="Proteomes" id="UP000001628">
    <property type="component" value="Unassembled WGS sequence"/>
</dbReference>
<dbReference type="GO" id="GO:0033557">
    <property type="term" value="C:Slx1-Slx4 complex"/>
    <property type="evidence" value="ECO:0007669"/>
    <property type="project" value="UniProtKB-UniRule"/>
</dbReference>
<dbReference type="GO" id="GO:0017108">
    <property type="term" value="F:5'-flap endonuclease activity"/>
    <property type="evidence" value="ECO:0007669"/>
    <property type="project" value="InterPro"/>
</dbReference>
<dbReference type="GO" id="GO:0006310">
    <property type="term" value="P:DNA recombination"/>
    <property type="evidence" value="ECO:0007669"/>
    <property type="project" value="UniProtKB-UniRule"/>
</dbReference>
<dbReference type="GO" id="GO:0006281">
    <property type="term" value="P:DNA repair"/>
    <property type="evidence" value="ECO:0007669"/>
    <property type="project" value="UniProtKB-UniRule"/>
</dbReference>
<dbReference type="GO" id="GO:0006260">
    <property type="term" value="P:DNA replication"/>
    <property type="evidence" value="ECO:0007669"/>
    <property type="project" value="InterPro"/>
</dbReference>
<dbReference type="CDD" id="cd22999">
    <property type="entry name" value="SAP_SLX4"/>
    <property type="match status" value="1"/>
</dbReference>
<dbReference type="HAMAP" id="MF_03110">
    <property type="entry name" value="Endonuc_su_Slx4"/>
    <property type="match status" value="1"/>
</dbReference>
<dbReference type="InterPro" id="IPR027784">
    <property type="entry name" value="Slx4_ascomycetes"/>
</dbReference>
<dbReference type="InterPro" id="IPR018574">
    <property type="entry name" value="Structure-sp_endonuc_su_Slx4"/>
</dbReference>
<dbReference type="Pfam" id="PF09494">
    <property type="entry name" value="Slx4"/>
    <property type="match status" value="1"/>
</dbReference>
<sequence>MNPATMTRQLSSDGRMFASSIITVIPDSSPTAAEAIELSSPLSLPSPTSLLDFLSTSTSRGPARSDTDGDKTQGKEVLDTKPILENSFRRENRVVSGTGGKAATGKKLKRRTESPGNVCQSEIHIVPGERIILRQTRPDKKAAKAKRTKKEDGLINRKLYGRVSKANQTVSLQPETKKSAPKGCNDTTQPADNGHINDLDDGLQLEQAIQRRLDWTPTKDTTIPVIDLVGDSPSSCEKSLSGMRSTRTMLSNYEFSGIVGTLGGSRSEGTPDAPTTKRPVELLKVNNLKEISGLSDSRQSSITEDSESATSKPRRVKAKNPPKSKLTTITSYATAKYTVVEKSVDLDPVETLLSDEPGKEKNVAKRTSGARCAKPGRKKSATTEKKNEPPIFKVVPPLEAFKAFDGQELLFGTSSQLANGHSEDRHEQNEGTSHISNSSAFIPLSRSESSSKAPSQTSLGSGFLKLSSSKNLWSAGARDLTGAVLEIDEIDLSEHWMKPSIFESQPKAPLGCKADTQIPPQLGEIDFDNSCQKPLAAIDPPELVTQSETPSEKGDLHKYIVKPTHINSCSQSGSSISVGSPEKPVQDKPIFSGFTTSELAKKVAAYGFKPIKSRDKMIALLEKCWENRNKTSNSVPKLTPGDGLSQVDESTQGQSLGQHLKPNSIPQTATTQVPKVKPDKRDTKSQGVPVPSRRSTSTSKVSRKRTESPSAILVDDDQRSDSTGDSVPPSRPRRPSKSCTPRDRQKSPESFNLPTIPLTIRSGKIPSTGTASETLPSLSTQITAAIKAQPRLRAFNGVKQPTWYEKILMYDPIQLEDLAVWLNTDGFERIGEDREVCPGLVREWCESKGVCCIWRKQRGVRAHCPLVRA</sequence>
<proteinExistence type="inferred from homology"/>
<keyword id="KW-0227">DNA damage</keyword>
<keyword id="KW-0233">DNA recombination</keyword>
<keyword id="KW-0234">DNA repair</keyword>
<keyword id="KW-0539">Nucleus</keyword>
<keyword id="KW-0597">Phosphoprotein</keyword>
<keyword id="KW-1185">Reference proteome</keyword>
<gene>
    <name evidence="1" type="primary">SLX4</name>
    <name type="ORF">PADG_04429</name>
</gene>
<evidence type="ECO:0000255" key="1">
    <source>
        <dbReference type="HAMAP-Rule" id="MF_03110"/>
    </source>
</evidence>
<evidence type="ECO:0000256" key="2">
    <source>
        <dbReference type="SAM" id="MobiDB-lite"/>
    </source>
</evidence>
<protein>
    <recommendedName>
        <fullName evidence="1">Structure-specific endonuclease subunit SLX4</fullName>
    </recommendedName>
</protein>
<comment type="function">
    <text evidence="1">Regulatory subunit of the SLX1-SLX4 structure-specific endonuclease that resolves DNA secondary structures generated during DNA repair and recombination. Has endonuclease activity towards branched DNA substrates, introducing single-strand cuts in duplex DNA close to junctions with ss-DNA.</text>
</comment>
<comment type="subunit">
    <text evidence="1">Forms a heterodimer with SLX1.</text>
</comment>
<comment type="subcellular location">
    <subcellularLocation>
        <location evidence="1">Nucleus</location>
    </subcellularLocation>
</comment>
<comment type="PTM">
    <text evidence="1">Phosphorylated in response to DNA damage.</text>
</comment>
<comment type="similarity">
    <text evidence="1">Belongs to the SLX4 family.</text>
</comment>
<accession>C1GAZ3</accession>
<organism>
    <name type="scientific">Paracoccidioides brasiliensis (strain Pb18)</name>
    <dbReference type="NCBI Taxonomy" id="502780"/>
    <lineage>
        <taxon>Eukaryota</taxon>
        <taxon>Fungi</taxon>
        <taxon>Dikarya</taxon>
        <taxon>Ascomycota</taxon>
        <taxon>Pezizomycotina</taxon>
        <taxon>Eurotiomycetes</taxon>
        <taxon>Eurotiomycetidae</taxon>
        <taxon>Onygenales</taxon>
        <taxon>Ajellomycetaceae</taxon>
        <taxon>Paracoccidioides</taxon>
    </lineage>
</organism>
<reference key="1">
    <citation type="journal article" date="2011" name="PLoS Genet.">
        <title>Comparative genomic analysis of human fungal pathogens causing paracoccidioidomycosis.</title>
        <authorList>
            <person name="Desjardins C.A."/>
            <person name="Champion M.D."/>
            <person name="Holder J.W."/>
            <person name="Muszewska A."/>
            <person name="Goldberg J."/>
            <person name="Bailao A.M."/>
            <person name="Brigido M.M."/>
            <person name="Ferreira M.E."/>
            <person name="Garcia A.M."/>
            <person name="Grynberg M."/>
            <person name="Gujja S."/>
            <person name="Heiman D.I."/>
            <person name="Henn M.R."/>
            <person name="Kodira C.D."/>
            <person name="Leon-Narvaez H."/>
            <person name="Longo L.V.G."/>
            <person name="Ma L.-J."/>
            <person name="Malavazi I."/>
            <person name="Matsuo A.L."/>
            <person name="Morais F.V."/>
            <person name="Pereira M."/>
            <person name="Rodriguez-Brito S."/>
            <person name="Sakthikumar S."/>
            <person name="Salem-Izacc S.M."/>
            <person name="Sykes S.M."/>
            <person name="Teixeira M.M."/>
            <person name="Vallejo M.C."/>
            <person name="Walter M.E."/>
            <person name="Yandava C."/>
            <person name="Young S."/>
            <person name="Zeng Q."/>
            <person name="Zucker J."/>
            <person name="Felipe M.S."/>
            <person name="Goldman G.H."/>
            <person name="Haas B.J."/>
            <person name="McEwen J.G."/>
            <person name="Nino-Vega G."/>
            <person name="Puccia R."/>
            <person name="San-Blas G."/>
            <person name="Soares C.M."/>
            <person name="Birren B.W."/>
            <person name="Cuomo C.A."/>
        </authorList>
    </citation>
    <scope>NUCLEOTIDE SEQUENCE [LARGE SCALE GENOMIC DNA]</scope>
    <source>
        <strain>Pb18</strain>
    </source>
</reference>
<name>SLX4_PARBD</name>